<sequence>MGARASILSGGKLDEWEKIQLRPGGKKRYKMKHLIWASRELERFALDPGLLETSEGCQKIIRQLQPSLQTGSEELKSLFNTVAVLYYVHQRAGVTDTKEALDKLEEEQNKSQQKTQQAAADKGVSQNYPIVQNLQGQMVHQSLSPRTLNAWVKVIEEKAFSPEVIPMFSALSEGATPTDLNTMLNTVGGHQAAMQMLKDTINEEAAEWDRLHPVHAGPAPPGQMREPRGSDIAGTTSTLQEQIQWMTGNPPVPVGDIYKRWIILGLNKIVRMYSPVSILDIKQGPKEPFRDYVDRFFKVLRAEQASQDVKGWMTDTLLVQNANPDCKTILKALGTGATLEEMMTACQGVGGPSHKARVLAEAMSQANSAIMMQKSNFKGQRRVVKCFNCGKEGHIARNCRAPRKKGCWKCGREGHQMKDCTERQANFLGKIWPSNKGRPGNFLQSRPEPTAPPAESFGFREEITPSPKQEQKDGELYPPLASLKSLFGNDP</sequence>
<dbReference type="EMBL" id="AF077336">
    <property type="protein sequence ID" value="AAD46087.1"/>
    <property type="molecule type" value="Genomic_DNA"/>
</dbReference>
<dbReference type="SMR" id="Q9QSR4"/>
<dbReference type="PRO" id="PR:Q9QSR4"/>
<dbReference type="Proteomes" id="UP000007418">
    <property type="component" value="Segment"/>
</dbReference>
<dbReference type="GO" id="GO:0042025">
    <property type="term" value="C:host cell nucleus"/>
    <property type="evidence" value="ECO:0007669"/>
    <property type="project" value="UniProtKB-SubCell"/>
</dbReference>
<dbReference type="GO" id="GO:0020002">
    <property type="term" value="C:host cell plasma membrane"/>
    <property type="evidence" value="ECO:0007669"/>
    <property type="project" value="UniProtKB-SubCell"/>
</dbReference>
<dbReference type="GO" id="GO:0072494">
    <property type="term" value="C:host multivesicular body"/>
    <property type="evidence" value="ECO:0007669"/>
    <property type="project" value="UniProtKB-SubCell"/>
</dbReference>
<dbReference type="GO" id="GO:0016020">
    <property type="term" value="C:membrane"/>
    <property type="evidence" value="ECO:0007669"/>
    <property type="project" value="UniProtKB-KW"/>
</dbReference>
<dbReference type="GO" id="GO:0019013">
    <property type="term" value="C:viral nucleocapsid"/>
    <property type="evidence" value="ECO:0007669"/>
    <property type="project" value="UniProtKB-KW"/>
</dbReference>
<dbReference type="GO" id="GO:0055036">
    <property type="term" value="C:virion membrane"/>
    <property type="evidence" value="ECO:0007669"/>
    <property type="project" value="UniProtKB-SubCell"/>
</dbReference>
<dbReference type="GO" id="GO:0003723">
    <property type="term" value="F:RNA binding"/>
    <property type="evidence" value="ECO:0007669"/>
    <property type="project" value="UniProtKB-KW"/>
</dbReference>
<dbReference type="GO" id="GO:0005198">
    <property type="term" value="F:structural molecule activity"/>
    <property type="evidence" value="ECO:0007669"/>
    <property type="project" value="InterPro"/>
</dbReference>
<dbReference type="GO" id="GO:0008270">
    <property type="term" value="F:zinc ion binding"/>
    <property type="evidence" value="ECO:0007669"/>
    <property type="project" value="UniProtKB-KW"/>
</dbReference>
<dbReference type="GO" id="GO:0039702">
    <property type="term" value="P:viral budding via host ESCRT complex"/>
    <property type="evidence" value="ECO:0007669"/>
    <property type="project" value="UniProtKB-KW"/>
</dbReference>
<dbReference type="GO" id="GO:0075523">
    <property type="term" value="P:viral translational frameshifting"/>
    <property type="evidence" value="ECO:0007669"/>
    <property type="project" value="UniProtKB-KW"/>
</dbReference>
<dbReference type="FunFam" id="1.10.1200.30:FF:000001">
    <property type="entry name" value="Gag polyprotein"/>
    <property type="match status" value="1"/>
</dbReference>
<dbReference type="FunFam" id="1.10.375.10:FF:000001">
    <property type="entry name" value="Gag polyprotein"/>
    <property type="match status" value="1"/>
</dbReference>
<dbReference type="FunFam" id="4.10.60.10:FF:000001">
    <property type="entry name" value="Gag polyprotein"/>
    <property type="match status" value="1"/>
</dbReference>
<dbReference type="Gene3D" id="1.10.1200.30">
    <property type="match status" value="1"/>
</dbReference>
<dbReference type="Gene3D" id="6.10.250.390">
    <property type="match status" value="1"/>
</dbReference>
<dbReference type="Gene3D" id="1.10.375.10">
    <property type="entry name" value="Human Immunodeficiency Virus Type 1 Capsid Protein"/>
    <property type="match status" value="1"/>
</dbReference>
<dbReference type="Gene3D" id="1.10.150.90">
    <property type="entry name" value="Immunodeficiency lentiviruses, gag gene matrix protein p17"/>
    <property type="match status" value="1"/>
</dbReference>
<dbReference type="Gene3D" id="1.20.5.760">
    <property type="entry name" value="Single helix bin"/>
    <property type="match status" value="1"/>
</dbReference>
<dbReference type="Gene3D" id="4.10.60.10">
    <property type="entry name" value="Zinc finger, CCHC-type"/>
    <property type="match status" value="1"/>
</dbReference>
<dbReference type="InterPro" id="IPR045345">
    <property type="entry name" value="Gag_p24_C"/>
</dbReference>
<dbReference type="InterPro" id="IPR014817">
    <property type="entry name" value="Gag_p6"/>
</dbReference>
<dbReference type="InterPro" id="IPR000071">
    <property type="entry name" value="Lentvrl_matrix_N"/>
</dbReference>
<dbReference type="InterPro" id="IPR012344">
    <property type="entry name" value="Matrix_HIV/RSV_N"/>
</dbReference>
<dbReference type="InterPro" id="IPR050195">
    <property type="entry name" value="Primate_lentivir_Gag_pol-like"/>
</dbReference>
<dbReference type="InterPro" id="IPR008916">
    <property type="entry name" value="Retrov_capsid_C"/>
</dbReference>
<dbReference type="InterPro" id="IPR008919">
    <property type="entry name" value="Retrov_capsid_N"/>
</dbReference>
<dbReference type="InterPro" id="IPR010999">
    <property type="entry name" value="Retrovr_matrix"/>
</dbReference>
<dbReference type="InterPro" id="IPR001878">
    <property type="entry name" value="Znf_CCHC"/>
</dbReference>
<dbReference type="InterPro" id="IPR036875">
    <property type="entry name" value="Znf_CCHC_sf"/>
</dbReference>
<dbReference type="PANTHER" id="PTHR40389">
    <property type="entry name" value="ENDOGENOUS RETROVIRUS GROUP K MEMBER 24 GAG POLYPROTEIN-RELATED"/>
    <property type="match status" value="1"/>
</dbReference>
<dbReference type="PANTHER" id="PTHR40389:SF3">
    <property type="entry name" value="IGE-BINDING PROTEIN"/>
    <property type="match status" value="1"/>
</dbReference>
<dbReference type="Pfam" id="PF00540">
    <property type="entry name" value="Gag_p17"/>
    <property type="match status" value="1"/>
</dbReference>
<dbReference type="Pfam" id="PF19317">
    <property type="entry name" value="Gag_p24_C"/>
    <property type="match status" value="1"/>
</dbReference>
<dbReference type="Pfam" id="PF08705">
    <property type="entry name" value="Gag_p6"/>
    <property type="match status" value="1"/>
</dbReference>
<dbReference type="Pfam" id="PF00098">
    <property type="entry name" value="zf-CCHC"/>
    <property type="match status" value="2"/>
</dbReference>
<dbReference type="PRINTS" id="PR00234">
    <property type="entry name" value="HIV1MATRIX"/>
</dbReference>
<dbReference type="SMART" id="SM00343">
    <property type="entry name" value="ZnF_C2HC"/>
    <property type="match status" value="2"/>
</dbReference>
<dbReference type="SUPFAM" id="SSF47836">
    <property type="entry name" value="Retroviral matrix proteins"/>
    <property type="match status" value="1"/>
</dbReference>
<dbReference type="SUPFAM" id="SSF47353">
    <property type="entry name" value="Retrovirus capsid dimerization domain-like"/>
    <property type="match status" value="1"/>
</dbReference>
<dbReference type="SUPFAM" id="SSF47943">
    <property type="entry name" value="Retrovirus capsid protein, N-terminal core domain"/>
    <property type="match status" value="1"/>
</dbReference>
<dbReference type="SUPFAM" id="SSF57756">
    <property type="entry name" value="Retrovirus zinc finger-like domains"/>
    <property type="match status" value="1"/>
</dbReference>
<dbReference type="PROSITE" id="PS50158">
    <property type="entry name" value="ZF_CCHC"/>
    <property type="match status" value="2"/>
</dbReference>
<keyword id="KW-0014">AIDS</keyword>
<keyword id="KW-0167">Capsid protein</keyword>
<keyword id="KW-1032">Host cell membrane</keyword>
<keyword id="KW-1035">Host cytoplasm</keyword>
<keyword id="KW-1039">Host endosome</keyword>
<keyword id="KW-1043">Host membrane</keyword>
<keyword id="KW-1048">Host nucleus</keyword>
<keyword id="KW-0945">Host-virus interaction</keyword>
<keyword id="KW-0449">Lipoprotein</keyword>
<keyword id="KW-0472">Membrane</keyword>
<keyword id="KW-0479">Metal-binding</keyword>
<keyword id="KW-0488">Methylation</keyword>
<keyword id="KW-0519">Myristate</keyword>
<keyword id="KW-0597">Phosphoprotein</keyword>
<keyword id="KW-1185">Reference proteome</keyword>
<keyword id="KW-0677">Repeat</keyword>
<keyword id="KW-0688">Ribosomal frameshifting</keyword>
<keyword id="KW-0694">RNA-binding</keyword>
<keyword id="KW-1198">Viral budding</keyword>
<keyword id="KW-1187">Viral budding via the host ESCRT complexes</keyword>
<keyword id="KW-0543">Viral nucleoprotein</keyword>
<keyword id="KW-1188">Viral release from host cell</keyword>
<keyword id="KW-0946">Virion</keyword>
<keyword id="KW-0862">Zinc</keyword>
<keyword id="KW-0863">Zinc-finger</keyword>
<protein>
    <recommendedName>
        <fullName>Gag polyprotein</fullName>
    </recommendedName>
    <alternativeName>
        <fullName>Pr55Gag</fullName>
    </alternativeName>
    <component>
        <recommendedName>
            <fullName>Matrix protein p17</fullName>
            <shortName>MA</shortName>
        </recommendedName>
    </component>
    <component>
        <recommendedName>
            <fullName>Capsid protein p24</fullName>
            <shortName>CA</shortName>
        </recommendedName>
    </component>
    <component>
        <recommendedName>
            <fullName evidence="6">Spacer peptide 1</fullName>
            <shortName>SP1</shortName>
        </recommendedName>
        <alternativeName>
            <fullName>p2</fullName>
        </alternativeName>
    </component>
    <component>
        <recommendedName>
            <fullName>Nucleocapsid protein p7</fullName>
            <shortName>NC</shortName>
        </recommendedName>
    </component>
    <component>
        <recommendedName>
            <fullName evidence="6">Spacer peptide 2</fullName>
            <shortName>SP2</shortName>
        </recommendedName>
        <alternativeName>
            <fullName>p1</fullName>
        </alternativeName>
    </component>
    <component>
        <recommendedName>
            <fullName>p6-gag</fullName>
        </recommendedName>
    </component>
</protein>
<proteinExistence type="inferred from homology"/>
<gene>
    <name type="primary">gag</name>
</gene>
<comment type="function">
    <molecule>Gag polyprotein</molecule>
    <text evidence="5">Mediates, with Gag-Pol polyprotein, the essential events in virion assembly, including binding the plasma membrane, making the protein-protein interactions necessary to create spherical particles, recruiting the viral Env proteins, and packaging the genomic RNA via direct interactions with the RNA packaging sequence (Psi).</text>
</comment>
<comment type="function">
    <molecule>Matrix protein p17</molecule>
    <text evidence="1 6">Targets the polyprotein to the plasma membrane via a multipartite membrane-binding signal, that includes its myristoylated N-terminus (By similarity). Matrix protein is part of the pre-integration complex. Implicated in the release from host cell mediated by Vpu. Binds to RNA (By similarity).</text>
</comment>
<comment type="function">
    <molecule>Capsid protein p24</molecule>
    <text evidence="5 6">Forms the conical core that encapsulates the genomic RNA-nucleocapsid complex in the virion. Most core are conical, with only 7% tubular. The core is constituted by capsid protein hexamer subunits. The core is disassembled soon after virion entry (By similarity). The capsid promotes immune invasion by cloaking viral DNA from CGAS detection (By similarity). Host restriction factors such as TRIM5-alpha or TRIMCyp bind retroviral capsids and cause premature capsid disassembly, leading to blocks in reverse transcription. Capsid restriction by TRIM5 is one of the factors which restricts HIV-1 to the human species. Host PIN1 apparently facilitates the virion uncoating (By similarity). On the other hand, interactions with PDZD8 or CYPA stabilize the capsid (By similarity).</text>
</comment>
<comment type="function">
    <molecule>Nucleocapsid protein p7</molecule>
    <text evidence="5">Encapsulates and protects viral dimeric unspliced genomic RNA (gRNA). Binds these RNAs through its zinc fingers. Acts as a nucleic acid chaperone which is involved in rearangement of nucleic acid secondary structure during gRNA retrotranscription. Also facilitates template switch leading to recombination. As part of the polyprotein, participates in gRNA dimerization, packaging, tRNA incorporation and virion assembly.</text>
</comment>
<comment type="function">
    <molecule>p6-gag</molecule>
    <text evidence="6">Plays a role in budding of the assembled particle by interacting with the host class E VPS proteins TSG101 and PDCD6IP/AIP1.</text>
</comment>
<comment type="subunit">
    <molecule>Gag polyprotein</molecule>
    <text evidence="4 5">Homotrimer; further assembles as hexamers of trimers. Oligomerization possibly creates a central hole into which the cytoplasmic tail of the gp41 envelope protein may be inserted. Interacts with host TRIM22; this interaction seems to disrupt proper trafficking of Gag polyprotein and may interfere with budding. Interacts with host PDZD8. When ubiquitinated, interacts (via p6-gag domain) with host PACSIN2; this interaction allows PACSIN2 recruitment to viral assembly sites and its subsequent incorporation into virions. Interacts with MOV10 (By similarity).</text>
</comment>
<comment type="subunit">
    <molecule>Matrix protein p17</molecule>
    <text evidence="5 6">Homotrimer; further assembles as hexamers of trimers. Interacts with gp41 (via C-terminus). Interacts with host CALM1; this interaction induces a conformational change in the Matrix protein, triggering exposure of the myristate group. Interacts with host AP3D1; this interaction allows the polyprotein trafficking to multivesicular bodies during virus assembly. Part of the pre-integration complex (PIC) which is composed of viral genome, matrix protein, Vpr and integrase.</text>
</comment>
<comment type="subunit">
    <molecule>Capsid protein p24</molecule>
    <text evidence="5 6">Homodimer; the homodimer further multimerizes as homohexamers or homopentamers (By similarity). Interacts with host NUP98 (By similarity). Interacts with host PPIA/CYPA; this interaction stabilizes the capsid (By similarity). Interacts with host NUP153 (By similarity). Interacts with host PDZD8; this interaction stabilizes the capsid. Interacts with host TRIM5; this interaction destabilizes the capsid (By similarity). Interacts with host CPSF6 (By similarity). Interacts with host NONO; the interaction is weak (By similarity).</text>
</comment>
<comment type="subunit">
    <molecule>Nucleocapsid protein p7</molecule>
    <text evidence="6">Interacts with host NUP98.</text>
</comment>
<comment type="subunit">
    <molecule>p6-gag</molecule>
    <text evidence="3 6">Interacts with Vpr; this interaction allows Vpr incorporation into the virion. Interacts with host TSG101. p6-gag interacts with host PDCD6IP/AIP1.</text>
</comment>
<comment type="subcellular location">
    <molecule>Gag polyprotein</molecule>
    <subcellularLocation>
        <location evidence="6">Host cell membrane</location>
        <topology evidence="6">Lipid-anchor</topology>
    </subcellularLocation>
    <subcellularLocation>
        <location evidence="6">Host endosome</location>
        <location evidence="6">Host multivesicular body</location>
    </subcellularLocation>
    <text evidence="6">These locations are probably linked to virus assembly sites. The main location is the cell membrane, but under some circumstances, late endosomal compartments can serve as productive sites for virion assembly.</text>
</comment>
<comment type="subcellular location">
    <molecule>Matrix protein p17</molecule>
    <subcellularLocation>
        <location evidence="6">Virion membrane</location>
        <topology evidence="6">Lipid-anchor</topology>
    </subcellularLocation>
    <subcellularLocation>
        <location evidence="1">Host nucleus</location>
    </subcellularLocation>
    <subcellularLocation>
        <location evidence="1">Host cytoplasm</location>
    </subcellularLocation>
</comment>
<comment type="subcellular location">
    <molecule>Capsid protein p24</molecule>
    <subcellularLocation>
        <location evidence="6">Virion</location>
    </subcellularLocation>
</comment>
<comment type="subcellular location">
    <molecule>Nucleocapsid protein p7</molecule>
    <subcellularLocation>
        <location evidence="6">Virion</location>
    </subcellularLocation>
</comment>
<comment type="alternative products">
    <event type="ribosomal frameshifting"/>
    <isoform>
        <id>Q9QSR4-1</id>
        <name>Gag polyprotein</name>
        <sequence type="displayed"/>
    </isoform>
    <isoform>
        <id>Q9QSR3-1</id>
        <name>Gag-Pol polyprotein</name>
        <sequence type="external"/>
    </isoform>
    <text>Translation results in the formation of the Gag polyprotein most of the time. Ribosomal frameshifting at the gag-pol genes boundary occurs at low frequency and produces the Gag-Pol polyprotein. This strategy of translation probably allows the virus to modulate the quantity of each viral protein. Maintenance of a correct Gag to Gag-Pol ratio is essential for RNA dimerization and viral infectivity.</text>
</comment>
<comment type="domain">
    <text evidence="6">Late-budding domains (L domains) are short sequence motifs essential for viral particle budding. They recruit proteins of the host ESCRT machinery (Endosomal Sorting Complex Required for Transport) or ESCRT-associated proteins. p6-gag contains two L domains: a PTAP/PSAP motif, which interacts with the UEV domain of TSG101 and a LYPX(n)L motif which interacts with PDCD6IP/AIP1.</text>
</comment>
<comment type="PTM">
    <text evidence="6">Gag-Pol polyprotein: Specific enzymatic cleavages by the viral protease yield mature proteins.</text>
</comment>
<comment type="PTM">
    <molecule>Matrix protein p17</molecule>
    <text evidence="5">Tyrosine phosphorylated presumably in the virion by a host kinase. Phosphorylation is apparently not a major regulator of membrane association.</text>
</comment>
<comment type="PTM">
    <text evidence="6">Capsid protein p24 is phosphorylated possibly by host MAPK1; this phosphorylation is necessary for Pin1-mediated virion uncoating.</text>
</comment>
<comment type="PTM">
    <text evidence="2">Nucleocapsid protein p7 is methylated by host PRMT6, impairing its function by reducing RNA annealing and the initiation of reverse transcription.</text>
</comment>
<comment type="miscellaneous">
    <text>HIV-1 lineages are divided in three main groups, M (for Major), O (for Outlier), and N (for New, or Non-M, Non-O). The vast majority of strains found worldwide belong to the group M. Group O seems to be endemic to and largely confined to Cameroon and neighboring countries in West Central Africa, where these viruses represent a small minority of HIV-1 strains. The group N is represented by a limited number of isolates from Cameroonian persons. The group M is further subdivided in 9 clades or subtypes (A to D, F to H, J and K).</text>
</comment>
<comment type="miscellaneous">
    <molecule>Isoform Gag polyprotein</molecule>
    <text>Produced by conventional translation.</text>
</comment>
<comment type="similarity">
    <text evidence="10">Belongs to the primate lentivirus group gag polyprotein family.</text>
</comment>
<evidence type="ECO:0000250" key="1"/>
<evidence type="ECO:0000250" key="2">
    <source>
        <dbReference type="UniProtKB" id="P03347"/>
    </source>
</evidence>
<evidence type="ECO:0000250" key="3">
    <source>
        <dbReference type="UniProtKB" id="P03348"/>
    </source>
</evidence>
<evidence type="ECO:0000250" key="4">
    <source>
        <dbReference type="UniProtKB" id="P03349"/>
    </source>
</evidence>
<evidence type="ECO:0000250" key="5">
    <source>
        <dbReference type="UniProtKB" id="P04591"/>
    </source>
</evidence>
<evidence type="ECO:0000250" key="6">
    <source>
        <dbReference type="UniProtKB" id="P12493"/>
    </source>
</evidence>
<evidence type="ECO:0000250" key="7">
    <source>
        <dbReference type="UniProtKB" id="P12497"/>
    </source>
</evidence>
<evidence type="ECO:0000255" key="8">
    <source>
        <dbReference type="PROSITE-ProRule" id="PRU00047"/>
    </source>
</evidence>
<evidence type="ECO:0000256" key="9">
    <source>
        <dbReference type="SAM" id="MobiDB-lite"/>
    </source>
</evidence>
<evidence type="ECO:0000305" key="10"/>
<name>GAG_HV1VI</name>
<feature type="initiator methionine" description="Removed; by host" evidence="1">
    <location>
        <position position="1"/>
    </location>
</feature>
<feature type="chain" id="PRO_0000261233" description="Gag polyprotein">
    <location>
        <begin position="2"/>
        <end position="491"/>
    </location>
</feature>
<feature type="chain" id="PRO_0000246410" description="Matrix protein p17" evidence="1">
    <location>
        <begin position="2"/>
        <end position="128"/>
    </location>
</feature>
<feature type="chain" id="PRO_0000246411" description="Capsid protein p24" evidence="1">
    <location>
        <begin position="129"/>
        <end position="359"/>
    </location>
</feature>
<feature type="peptide" id="PRO_0000246412" description="Spacer peptide 1" evidence="1">
    <location>
        <begin position="360"/>
        <end position="371"/>
    </location>
</feature>
<feature type="chain" id="PRO_0000246413" description="Nucleocapsid protein p7" evidence="1">
    <location>
        <begin position="372"/>
        <end position="426"/>
    </location>
</feature>
<feature type="peptide" id="PRO_0000246414" description="Spacer peptide 2" evidence="1">
    <location>
        <begin position="427"/>
        <end position="442"/>
    </location>
</feature>
<feature type="chain" id="PRO_0000246415" description="p6-gag" evidence="1">
    <location>
        <begin position="443"/>
        <end position="491"/>
    </location>
</feature>
<feature type="zinc finger region" description="CCHC-type 1" evidence="8">
    <location>
        <begin position="384"/>
        <end position="401"/>
    </location>
</feature>
<feature type="zinc finger region" description="CCHC-type 2" evidence="8">
    <location>
        <begin position="405"/>
        <end position="422"/>
    </location>
</feature>
<feature type="region of interest" description="Interaction with Gp41" evidence="6">
    <location>
        <begin position="7"/>
        <end position="31"/>
    </location>
</feature>
<feature type="region of interest" description="Interaction with host CALM1" evidence="5">
    <location>
        <begin position="8"/>
        <end position="43"/>
    </location>
</feature>
<feature type="region of interest" description="Interaction with host AP3D1" evidence="7">
    <location>
        <begin position="12"/>
        <end position="19"/>
    </location>
</feature>
<feature type="region of interest" description="Interaction with membrane phosphatidylinositol 4,5-bisphosphate and RNA" evidence="6">
    <location>
        <begin position="14"/>
        <end position="33"/>
    </location>
</feature>
<feature type="region of interest" description="Interaction with membrane phosphatidylinositol 4,5-bisphosphate" evidence="6">
    <location>
        <begin position="73"/>
        <end position="77"/>
    </location>
</feature>
<feature type="region of interest" description="Interaction with host PPIA/CYPA and NUP153" evidence="6">
    <location>
        <begin position="185"/>
        <end position="223"/>
    </location>
</feature>
<feature type="region of interest" description="PPIA/CYPA-binding loop" evidence="5">
    <location>
        <begin position="213"/>
        <end position="221"/>
    </location>
</feature>
<feature type="region of interest" description="Dimerization/Multimerization of capsid protein p24" evidence="5">
    <location>
        <begin position="273"/>
        <end position="359"/>
    </location>
</feature>
<feature type="region of interest" description="Disordered" evidence="9">
    <location>
        <begin position="432"/>
        <end position="491"/>
    </location>
</feature>
<feature type="short sequence motif" description="Nuclear export signal" evidence="1">
    <location>
        <begin position="16"/>
        <end position="22"/>
    </location>
</feature>
<feature type="short sequence motif" description="Nuclear localization signal" evidence="1">
    <location>
        <begin position="26"/>
        <end position="32"/>
    </location>
</feature>
<feature type="short sequence motif" description="PTAP/PSAP motif">
    <location>
        <begin position="449"/>
        <end position="452"/>
    </location>
</feature>
<feature type="short sequence motif" description="LYPX(n)L motif">
    <location>
        <begin position="476"/>
        <end position="486"/>
    </location>
</feature>
<feature type="compositionally biased region" description="Basic and acidic residues" evidence="9">
    <location>
        <begin position="458"/>
        <end position="475"/>
    </location>
</feature>
<feature type="site" description="Cleavage; by viral protease" evidence="1">
    <location>
        <begin position="128"/>
        <end position="129"/>
    </location>
</feature>
<feature type="site" description="Cleavage; by viral protease" evidence="1">
    <location>
        <begin position="359"/>
        <end position="360"/>
    </location>
</feature>
<feature type="site" description="Cleavage; by viral protease" evidence="1">
    <location>
        <begin position="371"/>
        <end position="372"/>
    </location>
</feature>
<feature type="site" description="Cleavage; by viral protease" evidence="1">
    <location>
        <begin position="426"/>
        <end position="427"/>
    </location>
</feature>
<feature type="site" description="Cleavage; by viral protease" evidence="1">
    <location>
        <begin position="442"/>
        <end position="443"/>
    </location>
</feature>
<feature type="modified residue" description="Phosphoserine; by host MAPK1" evidence="6">
    <location>
        <position position="144"/>
    </location>
</feature>
<feature type="modified residue" description="Asymmetric dimethylarginine; in Nucleocapsid protein p7; by host PRMT6" evidence="1">
    <location>
        <position position="381"/>
    </location>
</feature>
<feature type="modified residue" description="Asymmetric dimethylarginine; in Nucleocapsid protein p7; by host PRMT6" evidence="1">
    <location>
        <position position="403"/>
    </location>
</feature>
<feature type="lipid moiety-binding region" description="N-myristoyl glycine; by host" evidence="1">
    <location>
        <position position="2"/>
    </location>
</feature>
<reference key="1">
    <citation type="journal article" date="2000" name="Virology">
        <title>Virtually full-length subtype F and F/D recombinant HIV-1 from Africa and South America.</title>
        <authorList>
            <person name="Laukkanen T."/>
            <person name="Carr J.K."/>
            <person name="Janssens W."/>
            <person name="Liitsola K."/>
            <person name="Gotte D."/>
            <person name="McCutchan F.E."/>
            <person name="Op de Coul E."/>
            <person name="Cornelissen M."/>
            <person name="Heyndrickx L."/>
            <person name="van der Groen G."/>
            <person name="Salminen M.O."/>
        </authorList>
    </citation>
    <scope>NUCLEOTIDE SEQUENCE [GENOMIC DNA]</scope>
</reference>
<organismHost>
    <name type="scientific">Homo sapiens</name>
    <name type="common">Human</name>
    <dbReference type="NCBI Taxonomy" id="9606"/>
</organismHost>
<organism>
    <name type="scientific">Human immunodeficiency virus type 1 group M subtype F1 (isolate VI850)</name>
    <name type="common">HIV-1</name>
    <dbReference type="NCBI Taxonomy" id="388813"/>
    <lineage>
        <taxon>Viruses</taxon>
        <taxon>Riboviria</taxon>
        <taxon>Pararnavirae</taxon>
        <taxon>Artverviricota</taxon>
        <taxon>Revtraviricetes</taxon>
        <taxon>Ortervirales</taxon>
        <taxon>Retroviridae</taxon>
        <taxon>Orthoretrovirinae</taxon>
        <taxon>Lentivirus</taxon>
        <taxon>Human immunodeficiency virus type 1</taxon>
    </lineage>
</organism>
<accession>Q9QSR4</accession>